<feature type="chain" id="PRO_0000236411" description="ATP-dependent Clp protease proteolytic subunit 3">
    <location>
        <begin position="1"/>
        <end position="200"/>
    </location>
</feature>
<feature type="active site" description="Nucleophile" evidence="1">
    <location>
        <position position="101"/>
    </location>
</feature>
<feature type="active site" evidence="1">
    <location>
        <position position="126"/>
    </location>
</feature>
<protein>
    <recommendedName>
        <fullName evidence="1">ATP-dependent Clp protease proteolytic subunit 3</fullName>
        <ecNumber evidence="1">3.4.21.92</ecNumber>
    </recommendedName>
    <alternativeName>
        <fullName evidence="1">Endopeptidase Clp 3</fullName>
    </alternativeName>
</protein>
<keyword id="KW-0963">Cytoplasm</keyword>
<keyword id="KW-0378">Hydrolase</keyword>
<keyword id="KW-0645">Protease</keyword>
<keyword id="KW-1185">Reference proteome</keyword>
<keyword id="KW-0720">Serine protease</keyword>
<evidence type="ECO:0000255" key="1">
    <source>
        <dbReference type="HAMAP-Rule" id="MF_00444"/>
    </source>
</evidence>
<comment type="function">
    <text evidence="1">Cleaves peptides in various proteins in a process that requires ATP hydrolysis. Has a chymotrypsin-like activity. Plays a major role in the degradation of misfolded proteins.</text>
</comment>
<comment type="catalytic activity">
    <reaction evidence="1">
        <text>Hydrolysis of proteins to small peptides in the presence of ATP and magnesium. alpha-casein is the usual test substrate. In the absence of ATP, only oligopeptides shorter than five residues are hydrolyzed (such as succinyl-Leu-Tyr-|-NHMec, and Leu-Tyr-Leu-|-Tyr-Trp, in which cleavage of the -Tyr-|-Leu- and -Tyr-|-Trp bonds also occurs).</text>
        <dbReference type="EC" id="3.4.21.92"/>
    </reaction>
</comment>
<comment type="subunit">
    <text evidence="1">Fourteen ClpP subunits assemble into 2 heptameric rings which stack back to back to give a disk-like structure with a central cavity, resembling the structure of eukaryotic proteasomes.</text>
</comment>
<comment type="subcellular location">
    <subcellularLocation>
        <location evidence="1">Cytoplasm</location>
    </subcellularLocation>
</comment>
<comment type="similarity">
    <text evidence="1">Belongs to the peptidase S14 family.</text>
</comment>
<proteinExistence type="inferred from homology"/>
<gene>
    <name evidence="1" type="primary">clpP3</name>
    <name type="ordered locus">Syncc9902_1549</name>
</gene>
<reference key="1">
    <citation type="submission" date="2005-08" db="EMBL/GenBank/DDBJ databases">
        <title>Complete sequence of Synechococcus sp. CC9902.</title>
        <authorList>
            <person name="Copeland A."/>
            <person name="Lucas S."/>
            <person name="Lapidus A."/>
            <person name="Barry K."/>
            <person name="Detter J.C."/>
            <person name="Glavina T."/>
            <person name="Hammon N."/>
            <person name="Israni S."/>
            <person name="Pitluck S."/>
            <person name="Martinez M."/>
            <person name="Schmutz J."/>
            <person name="Larimer F."/>
            <person name="Land M."/>
            <person name="Kyrpides N."/>
            <person name="Ivanova N."/>
            <person name="Richardson P."/>
        </authorList>
    </citation>
    <scope>NUCLEOTIDE SEQUENCE [LARGE SCALE GENOMIC DNA]</scope>
    <source>
        <strain>CC9902</strain>
    </source>
</reference>
<name>CLPP3_SYNS9</name>
<accession>Q3AVC3</accession>
<organism>
    <name type="scientific">Synechococcus sp. (strain CC9902)</name>
    <dbReference type="NCBI Taxonomy" id="316279"/>
    <lineage>
        <taxon>Bacteria</taxon>
        <taxon>Bacillati</taxon>
        <taxon>Cyanobacteriota</taxon>
        <taxon>Cyanophyceae</taxon>
        <taxon>Synechococcales</taxon>
        <taxon>Synechococcaceae</taxon>
        <taxon>Synechococcus</taxon>
    </lineage>
</organism>
<dbReference type="EC" id="3.4.21.92" evidence="1"/>
<dbReference type="EMBL" id="CP000097">
    <property type="protein sequence ID" value="ABB26507.1"/>
    <property type="molecule type" value="Genomic_DNA"/>
</dbReference>
<dbReference type="RefSeq" id="WP_011360325.1">
    <property type="nucleotide sequence ID" value="NC_007513.1"/>
</dbReference>
<dbReference type="SMR" id="Q3AVC3"/>
<dbReference type="STRING" id="316279.Syncc9902_1549"/>
<dbReference type="MEROPS" id="S14.001"/>
<dbReference type="KEGG" id="sye:Syncc9902_1549"/>
<dbReference type="eggNOG" id="COG0740">
    <property type="taxonomic scope" value="Bacteria"/>
</dbReference>
<dbReference type="HOGENOM" id="CLU_058707_3_2_3"/>
<dbReference type="OrthoDB" id="571524at2"/>
<dbReference type="Proteomes" id="UP000002712">
    <property type="component" value="Chromosome"/>
</dbReference>
<dbReference type="GO" id="GO:0005737">
    <property type="term" value="C:cytoplasm"/>
    <property type="evidence" value="ECO:0007669"/>
    <property type="project" value="UniProtKB-SubCell"/>
</dbReference>
<dbReference type="GO" id="GO:0009368">
    <property type="term" value="C:endopeptidase Clp complex"/>
    <property type="evidence" value="ECO:0007669"/>
    <property type="project" value="TreeGrafter"/>
</dbReference>
<dbReference type="GO" id="GO:0004176">
    <property type="term" value="F:ATP-dependent peptidase activity"/>
    <property type="evidence" value="ECO:0007669"/>
    <property type="project" value="InterPro"/>
</dbReference>
<dbReference type="GO" id="GO:0051117">
    <property type="term" value="F:ATPase binding"/>
    <property type="evidence" value="ECO:0007669"/>
    <property type="project" value="TreeGrafter"/>
</dbReference>
<dbReference type="GO" id="GO:0004252">
    <property type="term" value="F:serine-type endopeptidase activity"/>
    <property type="evidence" value="ECO:0007669"/>
    <property type="project" value="UniProtKB-UniRule"/>
</dbReference>
<dbReference type="GO" id="GO:0006515">
    <property type="term" value="P:protein quality control for misfolded or incompletely synthesized proteins"/>
    <property type="evidence" value="ECO:0007669"/>
    <property type="project" value="TreeGrafter"/>
</dbReference>
<dbReference type="CDD" id="cd07017">
    <property type="entry name" value="S14_ClpP_2"/>
    <property type="match status" value="1"/>
</dbReference>
<dbReference type="FunFam" id="3.90.226.10:FF:000001">
    <property type="entry name" value="ATP-dependent Clp protease proteolytic subunit"/>
    <property type="match status" value="1"/>
</dbReference>
<dbReference type="Gene3D" id="3.90.226.10">
    <property type="entry name" value="2-enoyl-CoA Hydratase, Chain A, domain 1"/>
    <property type="match status" value="1"/>
</dbReference>
<dbReference type="HAMAP" id="MF_00444">
    <property type="entry name" value="ClpP"/>
    <property type="match status" value="1"/>
</dbReference>
<dbReference type="InterPro" id="IPR001907">
    <property type="entry name" value="ClpP"/>
</dbReference>
<dbReference type="InterPro" id="IPR029045">
    <property type="entry name" value="ClpP/crotonase-like_dom_sf"/>
</dbReference>
<dbReference type="InterPro" id="IPR023562">
    <property type="entry name" value="ClpP/TepA"/>
</dbReference>
<dbReference type="InterPro" id="IPR033135">
    <property type="entry name" value="ClpP_His_AS"/>
</dbReference>
<dbReference type="InterPro" id="IPR018215">
    <property type="entry name" value="ClpP_Ser_AS"/>
</dbReference>
<dbReference type="NCBIfam" id="NF001368">
    <property type="entry name" value="PRK00277.1"/>
    <property type="match status" value="1"/>
</dbReference>
<dbReference type="NCBIfam" id="NF009205">
    <property type="entry name" value="PRK12553.1"/>
    <property type="match status" value="1"/>
</dbReference>
<dbReference type="PANTHER" id="PTHR10381">
    <property type="entry name" value="ATP-DEPENDENT CLP PROTEASE PROTEOLYTIC SUBUNIT"/>
    <property type="match status" value="1"/>
</dbReference>
<dbReference type="PANTHER" id="PTHR10381:SF70">
    <property type="entry name" value="ATP-DEPENDENT CLP PROTEASE PROTEOLYTIC SUBUNIT"/>
    <property type="match status" value="1"/>
</dbReference>
<dbReference type="Pfam" id="PF00574">
    <property type="entry name" value="CLP_protease"/>
    <property type="match status" value="1"/>
</dbReference>
<dbReference type="PRINTS" id="PR00127">
    <property type="entry name" value="CLPPROTEASEP"/>
</dbReference>
<dbReference type="SUPFAM" id="SSF52096">
    <property type="entry name" value="ClpP/crotonase"/>
    <property type="match status" value="1"/>
</dbReference>
<dbReference type="PROSITE" id="PS00382">
    <property type="entry name" value="CLP_PROTEASE_HIS"/>
    <property type="match status" value="1"/>
</dbReference>
<dbReference type="PROSITE" id="PS00381">
    <property type="entry name" value="CLP_PROTEASE_SER"/>
    <property type="match status" value="1"/>
</dbReference>
<sequence length="200" mass="21987">MPIGTPSVPYRLPGSQMERWVDIYTRLGVERILFLGSEVNDGIANSLVAQMLYLDSEDSSKPIYLYINSPGGSVTAGLAIYDTIQYVKSEVVTICVGLAASMGAFLLAAGTKGKRVALPHSRIMIHQPLGGTSRRQASDIEIEAREILRMKDMLNHSLADMSGQTFEKIEKDTDRDYFLSAEEAMAYGLIDRVISHPTEA</sequence>